<accession>P57130</accession>
<evidence type="ECO:0000255" key="1">
    <source>
        <dbReference type="HAMAP-Rule" id="MF_00227"/>
    </source>
</evidence>
<name>RNPA_BUCAI</name>
<protein>
    <recommendedName>
        <fullName evidence="1">Ribonuclease P protein component</fullName>
        <shortName evidence="1">RNase P protein</shortName>
        <shortName evidence="1">RNaseP protein</shortName>
        <ecNumber evidence="1">3.1.26.5</ecNumber>
    </recommendedName>
    <alternativeName>
        <fullName evidence="1">Protein C5</fullName>
    </alternativeName>
</protein>
<keyword id="KW-0255">Endonuclease</keyword>
<keyword id="KW-0378">Hydrolase</keyword>
<keyword id="KW-0540">Nuclease</keyword>
<keyword id="KW-1185">Reference proteome</keyword>
<keyword id="KW-0694">RNA-binding</keyword>
<keyword id="KW-0819">tRNA processing</keyword>
<organism>
    <name type="scientific">Buchnera aphidicola subsp. Acyrthosiphon pisum (strain APS)</name>
    <name type="common">Acyrthosiphon pisum symbiotic bacterium</name>
    <dbReference type="NCBI Taxonomy" id="107806"/>
    <lineage>
        <taxon>Bacteria</taxon>
        <taxon>Pseudomonadati</taxon>
        <taxon>Pseudomonadota</taxon>
        <taxon>Gammaproteobacteria</taxon>
        <taxon>Enterobacterales</taxon>
        <taxon>Erwiniaceae</taxon>
        <taxon>Buchnera</taxon>
    </lineage>
</organism>
<dbReference type="EC" id="3.1.26.5" evidence="1"/>
<dbReference type="EMBL" id="BA000003">
    <property type="protein sequence ID" value="BAB12742.1"/>
    <property type="molecule type" value="Genomic_DNA"/>
</dbReference>
<dbReference type="RefSeq" id="NP_239856.1">
    <property type="nucleotide sequence ID" value="NC_002528.1"/>
</dbReference>
<dbReference type="RefSeq" id="WP_010895903.1">
    <property type="nucleotide sequence ID" value="NC_002528.1"/>
</dbReference>
<dbReference type="SMR" id="P57130"/>
<dbReference type="EnsemblBacteria" id="BAB12742">
    <property type="protein sequence ID" value="BAB12742"/>
    <property type="gene ID" value="BAB12742"/>
</dbReference>
<dbReference type="KEGG" id="buc:BU014"/>
<dbReference type="PATRIC" id="fig|107806.10.peg.27"/>
<dbReference type="eggNOG" id="COG0594">
    <property type="taxonomic scope" value="Bacteria"/>
</dbReference>
<dbReference type="HOGENOM" id="CLU_117179_11_0_6"/>
<dbReference type="Proteomes" id="UP000001806">
    <property type="component" value="Chromosome"/>
</dbReference>
<dbReference type="GO" id="GO:0030677">
    <property type="term" value="C:ribonuclease P complex"/>
    <property type="evidence" value="ECO:0007669"/>
    <property type="project" value="TreeGrafter"/>
</dbReference>
<dbReference type="GO" id="GO:0042781">
    <property type="term" value="F:3'-tRNA processing endoribonuclease activity"/>
    <property type="evidence" value="ECO:0007669"/>
    <property type="project" value="TreeGrafter"/>
</dbReference>
<dbReference type="GO" id="GO:0004526">
    <property type="term" value="F:ribonuclease P activity"/>
    <property type="evidence" value="ECO:0007669"/>
    <property type="project" value="UniProtKB-UniRule"/>
</dbReference>
<dbReference type="GO" id="GO:0000049">
    <property type="term" value="F:tRNA binding"/>
    <property type="evidence" value="ECO:0007669"/>
    <property type="project" value="UniProtKB-UniRule"/>
</dbReference>
<dbReference type="GO" id="GO:0001682">
    <property type="term" value="P:tRNA 5'-leader removal"/>
    <property type="evidence" value="ECO:0007669"/>
    <property type="project" value="UniProtKB-UniRule"/>
</dbReference>
<dbReference type="Gene3D" id="3.30.230.10">
    <property type="match status" value="1"/>
</dbReference>
<dbReference type="HAMAP" id="MF_00227">
    <property type="entry name" value="RNase_P"/>
    <property type="match status" value="1"/>
</dbReference>
<dbReference type="InterPro" id="IPR020568">
    <property type="entry name" value="Ribosomal_Su5_D2-typ_SF"/>
</dbReference>
<dbReference type="InterPro" id="IPR014721">
    <property type="entry name" value="Ribsml_uS5_D2-typ_fold_subgr"/>
</dbReference>
<dbReference type="InterPro" id="IPR000100">
    <property type="entry name" value="RNase_P"/>
</dbReference>
<dbReference type="InterPro" id="IPR020539">
    <property type="entry name" value="RNase_P_CS"/>
</dbReference>
<dbReference type="NCBIfam" id="TIGR00188">
    <property type="entry name" value="rnpA"/>
    <property type="match status" value="1"/>
</dbReference>
<dbReference type="PANTHER" id="PTHR33992">
    <property type="entry name" value="RIBONUCLEASE P PROTEIN COMPONENT"/>
    <property type="match status" value="1"/>
</dbReference>
<dbReference type="PANTHER" id="PTHR33992:SF1">
    <property type="entry name" value="RIBONUCLEASE P PROTEIN COMPONENT"/>
    <property type="match status" value="1"/>
</dbReference>
<dbReference type="Pfam" id="PF00825">
    <property type="entry name" value="Ribonuclease_P"/>
    <property type="match status" value="1"/>
</dbReference>
<dbReference type="SUPFAM" id="SSF54211">
    <property type="entry name" value="Ribosomal protein S5 domain 2-like"/>
    <property type="match status" value="1"/>
</dbReference>
<dbReference type="PROSITE" id="PS00648">
    <property type="entry name" value="RIBONUCLEASE_P"/>
    <property type="match status" value="1"/>
</dbReference>
<comment type="function">
    <text evidence="1">RNaseP catalyzes the removal of the 5'-leader sequence from pre-tRNA to produce the mature 5'-terminus. It can also cleave other RNA substrates such as 4.5S RNA. The protein component plays an auxiliary but essential role in vivo by binding to the 5'-leader sequence and broadening the substrate specificity of the ribozyme.</text>
</comment>
<comment type="catalytic activity">
    <reaction evidence="1">
        <text>Endonucleolytic cleavage of RNA, removing 5'-extranucleotides from tRNA precursor.</text>
        <dbReference type="EC" id="3.1.26.5"/>
    </reaction>
</comment>
<comment type="subunit">
    <text evidence="1">Consists of a catalytic RNA component (M1 or rnpB) and a protein subunit.</text>
</comment>
<comment type="similarity">
    <text evidence="1">Belongs to the RnpA family.</text>
</comment>
<proteinExistence type="inferred from homology"/>
<feature type="chain" id="PRO_0000198435" description="Ribonuclease P protein component">
    <location>
        <begin position="1"/>
        <end position="115"/>
    </location>
</feature>
<gene>
    <name evidence="1" type="primary">rnpA</name>
    <name type="ordered locus">BU014</name>
</gene>
<sequence length="115" mass="13700">MLNYFFKKQLRLSDSTSFQDVFNGSVKKKNTLEISILGRFNLLGHPRLGLSIPRKNIKHAHNRNLIKRLVRETFRLLQYKLLSMDFVVIAKKNILFLNNTRIIDMLNSLWSNYYR</sequence>
<reference key="1">
    <citation type="journal article" date="2000" name="Nature">
        <title>Genome sequence of the endocellular bacterial symbiont of aphids Buchnera sp. APS.</title>
        <authorList>
            <person name="Shigenobu S."/>
            <person name="Watanabe H."/>
            <person name="Hattori M."/>
            <person name="Sakaki Y."/>
            <person name="Ishikawa H."/>
        </authorList>
    </citation>
    <scope>NUCLEOTIDE SEQUENCE [LARGE SCALE GENOMIC DNA]</scope>
    <source>
        <strain>APS</strain>
    </source>
</reference>